<evidence type="ECO:0000250" key="1"/>
<evidence type="ECO:0000250" key="2">
    <source>
        <dbReference type="UniProtKB" id="P00748"/>
    </source>
</evidence>
<evidence type="ECO:0000255" key="3"/>
<evidence type="ECO:0000255" key="4">
    <source>
        <dbReference type="PROSITE-ProRule" id="PRU00076"/>
    </source>
</evidence>
<evidence type="ECO:0000255" key="5">
    <source>
        <dbReference type="PROSITE-ProRule" id="PRU00121"/>
    </source>
</evidence>
<evidence type="ECO:0000255" key="6">
    <source>
        <dbReference type="PROSITE-ProRule" id="PRU00274"/>
    </source>
</evidence>
<evidence type="ECO:0000255" key="7">
    <source>
        <dbReference type="PROSITE-ProRule" id="PRU00478"/>
    </source>
</evidence>
<evidence type="ECO:0000255" key="8">
    <source>
        <dbReference type="PROSITE-ProRule" id="PRU00479"/>
    </source>
</evidence>
<evidence type="ECO:0000269" key="9">
    <source>
    </source>
</evidence>
<comment type="function">
    <text evidence="2">Factor XII is a serum glycoprotein that participates in the initiation of blood coagulation, fibrinolysis, and the generation of bradykinin and angiotensin. Prekallikrein is cleaved by factor XII to form kallikrein, which then cleaves factor XII first to alpha-factor XIIa and then trypsin cleaves it to beta-factor XIIa. Alpha-factor XIIa activates factor XI to factor XIa (By similarity).</text>
</comment>
<comment type="catalytic activity">
    <reaction evidence="2">
        <text>Selective cleavage of Arg-|-Ile bonds in factor VII to form factor VIIa and factor XI to form factor XIa.</text>
        <dbReference type="EC" id="3.4.21.38"/>
    </reaction>
</comment>
<comment type="activity regulation">
    <text evidence="2">Activity is promoted in the presence of negatively charged surfaces.</text>
</comment>
<comment type="subunit">
    <text evidence="2">Interacts with HRG; the interaction, which is enhanced in the presence of zinc ions and inhibited by heparin-binding, inhibits factor XII autoactivation and contact-initiated coagulation.</text>
</comment>
<comment type="subcellular location">
    <subcellularLocation>
        <location>Secreted</location>
    </subcellularLocation>
</comment>
<comment type="PTM">
    <text evidence="1">O- and N-glycosylated.</text>
</comment>
<comment type="similarity">
    <text evidence="6">Belongs to the peptidase S1 family.</text>
</comment>
<proteinExistence type="evidence at protein level"/>
<gene>
    <name type="primary">F12</name>
</gene>
<organism>
    <name type="scientific">Cavia porcellus</name>
    <name type="common">Guinea pig</name>
    <dbReference type="NCBI Taxonomy" id="10141"/>
    <lineage>
        <taxon>Eukaryota</taxon>
        <taxon>Metazoa</taxon>
        <taxon>Chordata</taxon>
        <taxon>Craniata</taxon>
        <taxon>Vertebrata</taxon>
        <taxon>Euteleostomi</taxon>
        <taxon>Mammalia</taxon>
        <taxon>Eutheria</taxon>
        <taxon>Euarchontoglires</taxon>
        <taxon>Glires</taxon>
        <taxon>Rodentia</taxon>
        <taxon>Hystricomorpha</taxon>
        <taxon>Caviidae</taxon>
        <taxon>Cavia</taxon>
    </lineage>
</organism>
<accession>Q04962</accession>
<sequence>GRLLLGSLLVSLESALSAPPPWKAPKERRHRAEEFTVGLTVTGEPCYFPFQYNRQLYHHCIHKGRPGPRPWCATTPNFDQDQQWAYCLEPKKVKDHCSKHNPCQRGGICVNTLSSPHCLCPDHLTGKHCQREKCFEPQLHRFFHENEIWFRTGPAGVAKCHCKGPDAHCKQMHSQECQTNPCLNGGRCLEVEGHHLCDCPMGYTGPFCDLDTTASCYEGRGVSYRGMARTTVSGAKCQRWASEATYRNMTAEQALRRGLGHHTFCRNPDNDTRPWCFVWMGNRLSWEYCDLAQCQYPPQPTATPHDRFEHPKLPSSRLSILQTPQPTTQNQALANELPETSSLLCGQRLRKRLSSLSRIVGGLVALPGAHPYIAALYWGSNFCSGSLIAPCWVLTAAHCLQNRPAPEELKVVLGQDRHNQSCEHCQTLAVHSYRLHEAFSPSSYLNDLALLRLQKSADGSCAQLSPYVQTVCLPSGPAPPSESETTCCEVAGWGHQFEGAEEYSSFLQEAQVPLISSERCSSPEVHGDAFLSGMLCAGFLEGGTDACQGDSGGPLVCEDEAAEHRLILRGIVSWGSGCGDRNKPGVYTDVASYLTWIQKHTAS</sequence>
<protein>
    <recommendedName>
        <fullName>Coagulation factor XII</fullName>
        <ecNumber evidence="2">3.4.21.38</ecNumber>
    </recommendedName>
    <alternativeName>
        <fullName>Hageman factor</fullName>
        <shortName>HAF</shortName>
    </alternativeName>
    <component>
        <recommendedName>
            <fullName>Coagulation factor XIIa heavy chain</fullName>
        </recommendedName>
    </component>
    <component>
        <recommendedName>
            <fullName>Coagulation factor XIIa light chain</fullName>
        </recommendedName>
    </component>
</protein>
<feature type="signal peptide" evidence="9">
    <location>
        <begin position="1" status="less than"/>
        <end position="18"/>
    </location>
</feature>
<feature type="chain" id="PRO_0000027831" description="Coagulation factor XIIa heavy chain">
    <location>
        <begin position="19"/>
        <end position="358"/>
    </location>
</feature>
<feature type="chain" id="PRO_0000027832" description="Coagulation factor XIIa light chain">
    <location>
        <begin position="359"/>
        <end position="603"/>
    </location>
</feature>
<feature type="domain" description="Fibronectin type-II" evidence="7 8">
    <location>
        <begin position="41"/>
        <end position="89"/>
    </location>
</feature>
<feature type="domain" description="EGF-like 1" evidence="4">
    <location>
        <begin position="93"/>
        <end position="130"/>
    </location>
</feature>
<feature type="domain" description="Fibronectin type-I" evidence="7">
    <location>
        <begin position="132"/>
        <end position="172"/>
    </location>
</feature>
<feature type="domain" description="EGF-like 2" evidence="4">
    <location>
        <begin position="173"/>
        <end position="209"/>
    </location>
</feature>
<feature type="domain" description="Kringle" evidence="5">
    <location>
        <begin position="216"/>
        <end position="294"/>
    </location>
</feature>
<feature type="domain" description="Peptidase S1" evidence="6">
    <location>
        <begin position="359"/>
        <end position="602"/>
    </location>
</feature>
<feature type="active site" description="Charge relay system" evidence="1">
    <location>
        <position position="398"/>
    </location>
</feature>
<feature type="active site" description="Charge relay system" evidence="1">
    <location>
        <position position="447"/>
    </location>
</feature>
<feature type="active site" description="Charge relay system" evidence="1">
    <location>
        <position position="551"/>
    </location>
</feature>
<feature type="glycosylation site" description="N-linked (GlcNAc...) asparagine" evidence="3">
    <location>
        <position position="248"/>
    </location>
</feature>
<feature type="glycosylation site" description="N-linked (GlcNAc...) asparagine" evidence="3">
    <location>
        <position position="270"/>
    </location>
</feature>
<feature type="glycosylation site" description="N-linked (GlcNAc...) asparagine" evidence="3">
    <location>
        <position position="419"/>
    </location>
</feature>
<feature type="disulfide bond" evidence="1">
    <location>
        <begin position="46"/>
        <end position="72"/>
    </location>
</feature>
<feature type="disulfide bond" evidence="1">
    <location>
        <begin position="60"/>
        <end position="87"/>
    </location>
</feature>
<feature type="disulfide bond" evidence="1">
    <location>
        <begin position="97"/>
        <end position="109"/>
    </location>
</feature>
<feature type="disulfide bond" evidence="1">
    <location>
        <begin position="103"/>
        <end position="118"/>
    </location>
</feature>
<feature type="disulfide bond" evidence="1">
    <location>
        <begin position="120"/>
        <end position="129"/>
    </location>
</feature>
<feature type="disulfide bond" evidence="1">
    <location>
        <begin position="134"/>
        <end position="162"/>
    </location>
</feature>
<feature type="disulfide bond" evidence="1">
    <location>
        <begin position="160"/>
        <end position="169"/>
    </location>
</feature>
<feature type="disulfide bond" evidence="1">
    <location>
        <begin position="177"/>
        <end position="188"/>
    </location>
</feature>
<feature type="disulfide bond" evidence="1">
    <location>
        <begin position="182"/>
        <end position="197"/>
    </location>
</feature>
<feature type="disulfide bond" evidence="1">
    <location>
        <begin position="199"/>
        <end position="208"/>
    </location>
</feature>
<feature type="disulfide bond" evidence="1">
    <location>
        <begin position="216"/>
        <end position="294"/>
    </location>
</feature>
<feature type="disulfide bond" evidence="1">
    <location>
        <begin position="237"/>
        <end position="276"/>
    </location>
</feature>
<feature type="disulfide bond" evidence="1">
    <location>
        <begin position="265"/>
        <end position="289"/>
    </location>
</feature>
<feature type="disulfide bond" evidence="1">
    <location>
        <begin position="345"/>
        <end position="472"/>
    </location>
</feature>
<feature type="disulfide bond" evidence="1">
    <location>
        <begin position="383"/>
        <end position="399"/>
    </location>
</feature>
<feature type="disulfide bond" evidence="1">
    <location>
        <begin position="391"/>
        <end position="461"/>
    </location>
</feature>
<feature type="disulfide bond" evidence="1">
    <location>
        <begin position="422"/>
        <end position="425"/>
    </location>
</feature>
<feature type="disulfide bond" evidence="1">
    <location>
        <begin position="488"/>
        <end position="557"/>
    </location>
</feature>
<feature type="disulfide bond" evidence="1">
    <location>
        <begin position="520"/>
        <end position="536"/>
    </location>
</feature>
<feature type="disulfide bond" evidence="1">
    <location>
        <begin position="547"/>
        <end position="578"/>
    </location>
</feature>
<feature type="non-terminal residue">
    <location>
        <position position="1"/>
    </location>
</feature>
<keyword id="KW-0094">Blood coagulation</keyword>
<keyword id="KW-0903">Direct protein sequencing</keyword>
<keyword id="KW-1015">Disulfide bond</keyword>
<keyword id="KW-0245">EGF-like domain</keyword>
<keyword id="KW-0280">Fibrinolysis</keyword>
<keyword id="KW-0325">Glycoprotein</keyword>
<keyword id="KW-0356">Hemostasis</keyword>
<keyword id="KW-0378">Hydrolase</keyword>
<keyword id="KW-0420">Kringle</keyword>
<keyword id="KW-0645">Protease</keyword>
<keyword id="KW-1185">Reference proteome</keyword>
<keyword id="KW-0677">Repeat</keyword>
<keyword id="KW-0964">Secreted</keyword>
<keyword id="KW-0720">Serine protease</keyword>
<keyword id="KW-0732">Signal</keyword>
<keyword id="KW-0865">Zymogen</keyword>
<name>FA12_CAVPO</name>
<reference key="1">
    <citation type="journal article" date="1992" name="Biochim. Biophys. Acta">
        <title>Primary structure of guinea-pig Hageman factor: sequence around the cleavage site differs from the human molecule.</title>
        <authorList>
            <person name="Semba U."/>
            <person name="Yamamoto T."/>
            <person name="Kunisada T."/>
            <person name="Shibuya Y."/>
            <person name="Tanase S."/>
            <person name="Kambara T."/>
            <person name="Okabe H."/>
        </authorList>
    </citation>
    <scope>NUCLEOTIDE SEQUENCE [MRNA]</scope>
    <scope>PROTEIN SEQUENCE OF 19-37; 318-332 AND 359-373</scope>
    <source>
        <tissue>Liver</tissue>
    </source>
</reference>
<dbReference type="EC" id="3.4.21.38" evidence="2"/>
<dbReference type="EMBL" id="X68615">
    <property type="protein sequence ID" value="CAA48600.1"/>
    <property type="molecule type" value="mRNA"/>
</dbReference>
<dbReference type="PIR" id="S28941">
    <property type="entry name" value="S28941"/>
</dbReference>
<dbReference type="SMR" id="Q04962"/>
<dbReference type="FunCoup" id="Q04962">
    <property type="interactions" value="75"/>
</dbReference>
<dbReference type="STRING" id="10141.ENSCPOP00000018858"/>
<dbReference type="MEROPS" id="S01.211"/>
<dbReference type="GlyCosmos" id="Q04962">
    <property type="glycosylation" value="3 sites, No reported glycans"/>
</dbReference>
<dbReference type="eggNOG" id="KOG1217">
    <property type="taxonomic scope" value="Eukaryota"/>
</dbReference>
<dbReference type="eggNOG" id="KOG3627">
    <property type="taxonomic scope" value="Eukaryota"/>
</dbReference>
<dbReference type="InParanoid" id="Q04962"/>
<dbReference type="Proteomes" id="UP000005447">
    <property type="component" value="Unassembled WGS sequence"/>
</dbReference>
<dbReference type="GO" id="GO:0005615">
    <property type="term" value="C:extracellular space"/>
    <property type="evidence" value="ECO:0007669"/>
    <property type="project" value="InterPro"/>
</dbReference>
<dbReference type="GO" id="GO:0005791">
    <property type="term" value="C:rough endoplasmic reticulum"/>
    <property type="evidence" value="ECO:0007669"/>
    <property type="project" value="TreeGrafter"/>
</dbReference>
<dbReference type="GO" id="GO:0005509">
    <property type="term" value="F:calcium ion binding"/>
    <property type="evidence" value="ECO:0007669"/>
    <property type="project" value="InterPro"/>
</dbReference>
<dbReference type="GO" id="GO:0004252">
    <property type="term" value="F:serine-type endopeptidase activity"/>
    <property type="evidence" value="ECO:0007669"/>
    <property type="project" value="UniProtKB-EC"/>
</dbReference>
<dbReference type="GO" id="GO:0007596">
    <property type="term" value="P:blood coagulation"/>
    <property type="evidence" value="ECO:0007669"/>
    <property type="project" value="UniProtKB-KW"/>
</dbReference>
<dbReference type="GO" id="GO:0042730">
    <property type="term" value="P:fibrinolysis"/>
    <property type="evidence" value="ECO:0007669"/>
    <property type="project" value="UniProtKB-KW"/>
</dbReference>
<dbReference type="GO" id="GO:0031638">
    <property type="term" value="P:zymogen activation"/>
    <property type="evidence" value="ECO:0007669"/>
    <property type="project" value="TreeGrafter"/>
</dbReference>
<dbReference type="CDD" id="cd00054">
    <property type="entry name" value="EGF_CA"/>
    <property type="match status" value="2"/>
</dbReference>
<dbReference type="CDD" id="cd00061">
    <property type="entry name" value="FN1"/>
    <property type="match status" value="1"/>
</dbReference>
<dbReference type="CDD" id="cd00062">
    <property type="entry name" value="FN2"/>
    <property type="match status" value="1"/>
</dbReference>
<dbReference type="CDD" id="cd00108">
    <property type="entry name" value="KR"/>
    <property type="match status" value="1"/>
</dbReference>
<dbReference type="CDD" id="cd00190">
    <property type="entry name" value="Tryp_SPc"/>
    <property type="match status" value="1"/>
</dbReference>
<dbReference type="FunFam" id="2.10.10.10:FF:000010">
    <property type="entry name" value="Coagulation factor XII"/>
    <property type="match status" value="1"/>
</dbReference>
<dbReference type="FunFam" id="2.10.25.10:FF:000576">
    <property type="entry name" value="Coagulation factor XII"/>
    <property type="match status" value="1"/>
</dbReference>
<dbReference type="FunFam" id="2.40.10.10:FF:000097">
    <property type="entry name" value="Coagulation factor XII"/>
    <property type="match status" value="1"/>
</dbReference>
<dbReference type="FunFam" id="2.40.10.10:FF:000098">
    <property type="entry name" value="Coagulation factor XII"/>
    <property type="match status" value="1"/>
</dbReference>
<dbReference type="FunFam" id="2.40.20.10:FF:000016">
    <property type="entry name" value="Coagulation factor XII"/>
    <property type="match status" value="1"/>
</dbReference>
<dbReference type="FunFam" id="2.10.25.10:FF:000338">
    <property type="entry name" value="hepatocyte growth factor activator"/>
    <property type="match status" value="1"/>
</dbReference>
<dbReference type="Gene3D" id="2.10.10.10">
    <property type="entry name" value="Fibronectin, type II, collagen-binding"/>
    <property type="match status" value="1"/>
</dbReference>
<dbReference type="Gene3D" id="2.10.25.10">
    <property type="entry name" value="Laminin"/>
    <property type="match status" value="2"/>
</dbReference>
<dbReference type="Gene3D" id="2.40.20.10">
    <property type="entry name" value="Plasminogen Kringle 4"/>
    <property type="match status" value="1"/>
</dbReference>
<dbReference type="Gene3D" id="2.40.10.10">
    <property type="entry name" value="Trypsin-like serine proteases"/>
    <property type="match status" value="2"/>
</dbReference>
<dbReference type="InterPro" id="IPR014394">
    <property type="entry name" value="Coagulation_fac_XII/HGFA"/>
</dbReference>
<dbReference type="InterPro" id="IPR001881">
    <property type="entry name" value="EGF-like_Ca-bd_dom"/>
</dbReference>
<dbReference type="InterPro" id="IPR000742">
    <property type="entry name" value="EGF-like_dom"/>
</dbReference>
<dbReference type="InterPro" id="IPR000083">
    <property type="entry name" value="Fibronectin_type1"/>
</dbReference>
<dbReference type="InterPro" id="IPR000562">
    <property type="entry name" value="FN_type2_dom"/>
</dbReference>
<dbReference type="InterPro" id="IPR036943">
    <property type="entry name" value="FN_type2_sf"/>
</dbReference>
<dbReference type="InterPro" id="IPR000001">
    <property type="entry name" value="Kringle"/>
</dbReference>
<dbReference type="InterPro" id="IPR013806">
    <property type="entry name" value="Kringle-like"/>
</dbReference>
<dbReference type="InterPro" id="IPR018056">
    <property type="entry name" value="Kringle_CS"/>
</dbReference>
<dbReference type="InterPro" id="IPR038178">
    <property type="entry name" value="Kringle_sf"/>
</dbReference>
<dbReference type="InterPro" id="IPR009003">
    <property type="entry name" value="Peptidase_S1_PA"/>
</dbReference>
<dbReference type="InterPro" id="IPR043504">
    <property type="entry name" value="Peptidase_S1_PA_chymotrypsin"/>
</dbReference>
<dbReference type="InterPro" id="IPR001314">
    <property type="entry name" value="Peptidase_S1A"/>
</dbReference>
<dbReference type="InterPro" id="IPR050127">
    <property type="entry name" value="Serine_Proteases_S1"/>
</dbReference>
<dbReference type="InterPro" id="IPR001254">
    <property type="entry name" value="Trypsin_dom"/>
</dbReference>
<dbReference type="InterPro" id="IPR018114">
    <property type="entry name" value="TRYPSIN_HIS"/>
</dbReference>
<dbReference type="InterPro" id="IPR033116">
    <property type="entry name" value="TRYPSIN_SER"/>
</dbReference>
<dbReference type="PANTHER" id="PTHR24264:SF46">
    <property type="entry name" value="COAGULATION FACTOR XII"/>
    <property type="match status" value="1"/>
</dbReference>
<dbReference type="PANTHER" id="PTHR24264">
    <property type="entry name" value="TRYPSIN-RELATED"/>
    <property type="match status" value="1"/>
</dbReference>
<dbReference type="Pfam" id="PF00008">
    <property type="entry name" value="EGF"/>
    <property type="match status" value="2"/>
</dbReference>
<dbReference type="Pfam" id="PF00039">
    <property type="entry name" value="fn1"/>
    <property type="match status" value="1"/>
</dbReference>
<dbReference type="Pfam" id="PF00040">
    <property type="entry name" value="fn2"/>
    <property type="match status" value="1"/>
</dbReference>
<dbReference type="Pfam" id="PF00051">
    <property type="entry name" value="Kringle"/>
    <property type="match status" value="1"/>
</dbReference>
<dbReference type="Pfam" id="PF00089">
    <property type="entry name" value="Trypsin"/>
    <property type="match status" value="1"/>
</dbReference>
<dbReference type="PIRSF" id="PIRSF001146">
    <property type="entry name" value="Factor_XII_HGFA"/>
    <property type="match status" value="1"/>
</dbReference>
<dbReference type="PRINTS" id="PR00722">
    <property type="entry name" value="CHYMOTRYPSIN"/>
</dbReference>
<dbReference type="PRINTS" id="PR00013">
    <property type="entry name" value="FNTYPEII"/>
</dbReference>
<dbReference type="PRINTS" id="PR00018">
    <property type="entry name" value="KRINGLE"/>
</dbReference>
<dbReference type="SMART" id="SM00181">
    <property type="entry name" value="EGF"/>
    <property type="match status" value="2"/>
</dbReference>
<dbReference type="SMART" id="SM00179">
    <property type="entry name" value="EGF_CA"/>
    <property type="match status" value="2"/>
</dbReference>
<dbReference type="SMART" id="SM00058">
    <property type="entry name" value="FN1"/>
    <property type="match status" value="1"/>
</dbReference>
<dbReference type="SMART" id="SM00059">
    <property type="entry name" value="FN2"/>
    <property type="match status" value="1"/>
</dbReference>
<dbReference type="SMART" id="SM00130">
    <property type="entry name" value="KR"/>
    <property type="match status" value="1"/>
</dbReference>
<dbReference type="SMART" id="SM00020">
    <property type="entry name" value="Tryp_SPc"/>
    <property type="match status" value="1"/>
</dbReference>
<dbReference type="SUPFAM" id="SSF57196">
    <property type="entry name" value="EGF/Laminin"/>
    <property type="match status" value="1"/>
</dbReference>
<dbReference type="SUPFAM" id="SSF57440">
    <property type="entry name" value="Kringle-like"/>
    <property type="match status" value="2"/>
</dbReference>
<dbReference type="SUPFAM" id="SSF50494">
    <property type="entry name" value="Trypsin-like serine proteases"/>
    <property type="match status" value="1"/>
</dbReference>
<dbReference type="PROSITE" id="PS00022">
    <property type="entry name" value="EGF_1"/>
    <property type="match status" value="2"/>
</dbReference>
<dbReference type="PROSITE" id="PS01186">
    <property type="entry name" value="EGF_2"/>
    <property type="match status" value="1"/>
</dbReference>
<dbReference type="PROSITE" id="PS50026">
    <property type="entry name" value="EGF_3"/>
    <property type="match status" value="2"/>
</dbReference>
<dbReference type="PROSITE" id="PS01253">
    <property type="entry name" value="FN1_1"/>
    <property type="match status" value="1"/>
</dbReference>
<dbReference type="PROSITE" id="PS51091">
    <property type="entry name" value="FN1_2"/>
    <property type="match status" value="1"/>
</dbReference>
<dbReference type="PROSITE" id="PS00023">
    <property type="entry name" value="FN2_1"/>
    <property type="match status" value="1"/>
</dbReference>
<dbReference type="PROSITE" id="PS51092">
    <property type="entry name" value="FN2_2"/>
    <property type="match status" value="1"/>
</dbReference>
<dbReference type="PROSITE" id="PS00021">
    <property type="entry name" value="KRINGLE_1"/>
    <property type="match status" value="1"/>
</dbReference>
<dbReference type="PROSITE" id="PS50070">
    <property type="entry name" value="KRINGLE_2"/>
    <property type="match status" value="1"/>
</dbReference>
<dbReference type="PROSITE" id="PS50240">
    <property type="entry name" value="TRYPSIN_DOM"/>
    <property type="match status" value="1"/>
</dbReference>
<dbReference type="PROSITE" id="PS00134">
    <property type="entry name" value="TRYPSIN_HIS"/>
    <property type="match status" value="1"/>
</dbReference>
<dbReference type="PROSITE" id="PS00135">
    <property type="entry name" value="TRYPSIN_SER"/>
    <property type="match status" value="1"/>
</dbReference>